<gene>
    <name type="primary">bfpA</name>
    <name type="ordered locus">E2348_P1_003</name>
</gene>
<feature type="propeptide" id="PRO_0000024196" description="Leader sequence" evidence="3 5">
    <location>
        <begin position="1"/>
        <end position="13"/>
    </location>
</feature>
<feature type="chain" id="PRO_0000024197" description="Major structural subunit of bundle-forming pilus">
    <location>
        <begin position="14"/>
        <end position="193"/>
    </location>
</feature>
<feature type="transmembrane region" description="Helical" evidence="8">
    <location>
        <begin position="14"/>
        <end position="35"/>
    </location>
</feature>
<feature type="modified residue" description="N-methylleucine" evidence="3 5">
    <location>
        <position position="14"/>
    </location>
</feature>
<feature type="disulfide bond" evidence="4 10">
    <location>
        <begin position="129"/>
        <end position="179"/>
    </location>
</feature>
<feature type="turn" evidence="11">
    <location>
        <begin position="41"/>
        <end position="43"/>
    </location>
</feature>
<feature type="helix" evidence="11">
    <location>
        <begin position="44"/>
        <end position="64"/>
    </location>
</feature>
<feature type="helix" evidence="11">
    <location>
        <begin position="67"/>
        <end position="70"/>
    </location>
</feature>
<feature type="helix" evidence="11">
    <location>
        <begin position="73"/>
        <end position="80"/>
    </location>
</feature>
<feature type="strand" evidence="11">
    <location>
        <begin position="81"/>
        <end position="84"/>
    </location>
</feature>
<feature type="helix" evidence="11">
    <location>
        <begin position="86"/>
        <end position="88"/>
    </location>
</feature>
<feature type="strand" evidence="11">
    <location>
        <begin position="91"/>
        <end position="93"/>
    </location>
</feature>
<feature type="strand" evidence="11">
    <location>
        <begin position="96"/>
        <end position="98"/>
    </location>
</feature>
<feature type="strand" evidence="11">
    <location>
        <begin position="101"/>
        <end position="103"/>
    </location>
</feature>
<feature type="strand" evidence="11">
    <location>
        <begin position="106"/>
        <end position="108"/>
    </location>
</feature>
<feature type="turn" evidence="11">
    <location>
        <begin position="112"/>
        <end position="114"/>
    </location>
</feature>
<feature type="strand" evidence="11">
    <location>
        <begin position="117"/>
        <end position="122"/>
    </location>
</feature>
<feature type="helix" evidence="11">
    <location>
        <begin position="126"/>
        <end position="133"/>
    </location>
</feature>
<feature type="turn" evidence="11">
    <location>
        <begin position="137"/>
        <end position="140"/>
    </location>
</feature>
<feature type="strand" evidence="11">
    <location>
        <begin position="142"/>
        <end position="146"/>
    </location>
</feature>
<feature type="helix" evidence="11">
    <location>
        <begin position="151"/>
        <end position="153"/>
    </location>
</feature>
<feature type="strand" evidence="11">
    <location>
        <begin position="157"/>
        <end position="159"/>
    </location>
</feature>
<feature type="strand" evidence="11">
    <location>
        <begin position="162"/>
        <end position="167"/>
    </location>
</feature>
<feature type="helix" evidence="11">
    <location>
        <begin position="171"/>
        <end position="178"/>
    </location>
</feature>
<feature type="strand" evidence="11">
    <location>
        <begin position="179"/>
        <end position="181"/>
    </location>
</feature>
<feature type="strand" evidence="11">
    <location>
        <begin position="188"/>
        <end position="191"/>
    </location>
</feature>
<protein>
    <recommendedName>
        <fullName>Major structural subunit of bundle-forming pilus</fullName>
    </recommendedName>
    <alternativeName>
        <fullName>Bundle-forming pilin</fullName>
        <shortName>BFP</shortName>
        <shortName>Bundlin</shortName>
    </alternativeName>
</protein>
<comment type="function">
    <text evidence="6 7">Major component of type IV bundle-forming pili (BFP) that plays a role in adherence to host cells and virulence.</text>
</comment>
<comment type="subunit">
    <text evidence="1">10 to 100 laterally aligned filaments or bundle-forming pili coalesce into rope-like bundles. These form linkages between the bacteria within the enteropathogenic E.coli (EPEC) microcolonies that are attached to epithelial cells (By similarity).</text>
</comment>
<comment type="subcellular location">
    <subcellularLocation>
        <location>Fimbrium</location>
    </subcellularLocation>
    <subcellularLocation>
        <location evidence="2">Membrane</location>
        <topology evidence="2">Single-pass membrane protein</topology>
    </subcellularLocation>
</comment>
<comment type="disruption phenotype">
    <text evidence="7">Deletion mutants cause significantly less diarrhea in volonteers.</text>
</comment>
<comment type="similarity">
    <text evidence="8">Belongs to the N-Me-Phe pilin family.</text>
</comment>
<comment type="sequence caution" evidence="9">
    <conflict type="miscellaneous discrepancy" ref="5"/>
    <text>The modified residue is misidentified as methionine.</text>
</comment>
<accession>P33553</accession>
<accession>B7UTD1</accession>
<accession>Q798R3</accession>
<reference key="1">
    <citation type="journal article" date="1992" name="Mol. Microbiol.">
        <title>A plasmid-encoded type IV fimbrial gene of enteropathogenic Escherichia coli associated with localized adherence.</title>
        <authorList>
            <person name="Donnenberg M.S."/>
            <person name="Giron J.A."/>
            <person name="Nataro J.P."/>
            <person name="Kaper J.B."/>
        </authorList>
    </citation>
    <scope>NUCLEOTIDE SEQUENCE [GENOMIC DNA]</scope>
    <scope>FUNCTION</scope>
</reference>
<reference key="2">
    <citation type="journal article" date="1996" name="Mol. Microbiol.">
        <title>A cluster of fourteen genes from enteropathogenic Escherichia coli is sufficient for the biogenesis of a type IV pilus.</title>
        <authorList>
            <person name="Stone K.D."/>
            <person name="Zhang H."/>
            <person name="Carlson L.K."/>
            <person name="Donnenberg M.S."/>
        </authorList>
    </citation>
    <scope>NUCLEOTIDE SEQUENCE [GENOMIC DNA]</scope>
</reference>
<reference key="3">
    <citation type="journal article" date="2000" name="Infect. Immun.">
        <title>Molecular variation among type IV pilin (bfpA) genes from diverse enteropathogenic Escherichia coli strains.</title>
        <authorList>
            <person name="Blank T.E."/>
            <person name="Zhong H."/>
            <person name="Bell A.L."/>
            <person name="Whittam T.S."/>
            <person name="Donnenberg M.S."/>
        </authorList>
    </citation>
    <scope>NUCLEOTIDE SEQUENCE [GENOMIC DNA]</scope>
</reference>
<reference key="4">
    <citation type="journal article" date="2009" name="J. Bacteriol.">
        <title>Complete genome sequence and comparative genome analysis of enteropathogenic Escherichia coli O127:H6 strain E2348/69.</title>
        <authorList>
            <person name="Iguchi A."/>
            <person name="Thomson N.R."/>
            <person name="Ogura Y."/>
            <person name="Saunders D."/>
            <person name="Ooka T."/>
            <person name="Henderson I.R."/>
            <person name="Harris D."/>
            <person name="Asadulghani M."/>
            <person name="Kurokawa K."/>
            <person name="Dean P."/>
            <person name="Kenny B."/>
            <person name="Quail M.A."/>
            <person name="Thurston S."/>
            <person name="Dougan G."/>
            <person name="Hayashi T."/>
            <person name="Parkhill J."/>
            <person name="Frankel G."/>
        </authorList>
    </citation>
    <scope>NUCLEOTIDE SEQUENCE [LARGE SCALE GENOMIC DNA]</scope>
    <source>
        <strain>E2348/69 / EPEC</strain>
    </source>
</reference>
<reference key="5">
    <citation type="journal article" date="1991" name="Science">
        <title>An inducible bundle-forming pilus of enteropathogenic Escherichia coli.</title>
        <authorList>
            <person name="Giron J.A."/>
            <person name="Ho A.S.Y."/>
            <person name="Schoolnik G.K."/>
        </authorList>
    </citation>
    <scope>PROTEIN SEQUENCE OF 14-41</scope>
    <scope>METHYLATION AT LEU-14</scope>
</reference>
<reference key="6">
    <citation type="journal article" date="1993" name="Mol. Microbiol.">
        <title>Cloning and characterization of the bundle-forming pilin gene of enteropathogenic Escherichia coli and its distribution in Salmonella serotypes.</title>
        <authorList>
            <person name="Sohel I."/>
            <person name="Puente J.L."/>
            <person name="Murray W.J."/>
            <person name="Vuopio-Varkila J."/>
            <person name="Schoolnik G.K."/>
        </authorList>
    </citation>
    <scope>FUNCTION</scope>
    <source>
        <strain>B171</strain>
    </source>
</reference>
<reference key="7">
    <citation type="journal article" date="1998" name="Science">
        <title>Type IV pili, transient bacterial aggregates, and virulence of enteropathogenic Escherichia coli.</title>
        <authorList>
            <person name="Bieber D."/>
            <person name="Ramer S.W."/>
            <person name="Wu C.Y."/>
            <person name="Murray W.J."/>
            <person name="Tobe T."/>
            <person name="Fernandez R."/>
            <person name="Schoolnik G.K."/>
        </authorList>
    </citation>
    <scope>FUNCTION IN VIRULENCE</scope>
    <scope>DISRUPTION PHENOTYPE</scope>
    <source>
        <strain>B171-8</strain>
    </source>
</reference>
<reference evidence="10" key="8">
    <citation type="journal article" date="2005" name="J. Biol. Chem.">
        <title>Structure of the bundle-forming pilus from enteropathogenic Escherichia coli.</title>
        <authorList>
            <person name="Ramboarina S."/>
            <person name="Fernandes P.J."/>
            <person name="Daniell S."/>
            <person name="Islam S."/>
            <person name="Simpson P."/>
            <person name="Frankel G."/>
            <person name="Booy F."/>
            <person name="Donnenberg M.S."/>
            <person name="Matthews S."/>
        </authorList>
    </citation>
    <scope>STRUCTURE BY NMR OF 38-193</scope>
    <scope>DISULFIDE BOND</scope>
</reference>
<geneLocation type="plasmid">
    <name>pMAR2</name>
</geneLocation>
<sequence>MVSKIMNKKYEKGLSLIESAMVLALAATVTAGVMFYYQSASDSNKSQNAISEVMSATSAINGLYIGQTSYSGLDSTILLNTSAIPDNYKDTTNKKITNPFGGELNVGPANNNTAFGYYLTLTRLDKAACVSLATLNLGTSAKGYGVNISGENNITSFGNSADQAAKSTAITPAEAATACKNTDSTNKVTYFMK</sequence>
<evidence type="ECO:0000250" key="1"/>
<evidence type="ECO:0000255" key="2"/>
<evidence type="ECO:0000255" key="3">
    <source>
        <dbReference type="PROSITE-ProRule" id="PRU01070"/>
    </source>
</evidence>
<evidence type="ECO:0000269" key="4">
    <source>
    </source>
</evidence>
<evidence type="ECO:0000269" key="5">
    <source>
    </source>
</evidence>
<evidence type="ECO:0000269" key="6">
    <source>
    </source>
</evidence>
<evidence type="ECO:0000269" key="7">
    <source>
    </source>
</evidence>
<evidence type="ECO:0000305" key="8"/>
<evidence type="ECO:0000305" key="9">
    <source>
    </source>
</evidence>
<evidence type="ECO:0007744" key="10">
    <source>
        <dbReference type="PDB" id="1ZWT"/>
    </source>
</evidence>
<evidence type="ECO:0007829" key="11">
    <source>
        <dbReference type="PDB" id="1ZWT"/>
    </source>
</evidence>
<name>BFPA_ECO27</name>
<organism>
    <name type="scientific">Escherichia coli O127:H6 (strain E2348/69 / EPEC)</name>
    <dbReference type="NCBI Taxonomy" id="574521"/>
    <lineage>
        <taxon>Bacteria</taxon>
        <taxon>Pseudomonadati</taxon>
        <taxon>Pseudomonadota</taxon>
        <taxon>Gammaproteobacteria</taxon>
        <taxon>Enterobacterales</taxon>
        <taxon>Enterobacteriaceae</taxon>
        <taxon>Escherichia</taxon>
    </lineage>
</organism>
<keyword id="KW-0002">3D-structure</keyword>
<keyword id="KW-0903">Direct protein sequencing</keyword>
<keyword id="KW-1015">Disulfide bond</keyword>
<keyword id="KW-0281">Fimbrium</keyword>
<keyword id="KW-0472">Membrane</keyword>
<keyword id="KW-0488">Methylation</keyword>
<keyword id="KW-0614">Plasmid</keyword>
<keyword id="KW-1185">Reference proteome</keyword>
<keyword id="KW-0812">Transmembrane</keyword>
<keyword id="KW-1133">Transmembrane helix</keyword>
<proteinExistence type="evidence at protein level"/>
<dbReference type="EMBL" id="Z12295">
    <property type="protein sequence ID" value="CAA78167.1"/>
    <property type="molecule type" value="Genomic_DNA"/>
</dbReference>
<dbReference type="EMBL" id="Z68186">
    <property type="protein sequence ID" value="CAA92326.1"/>
    <property type="molecule type" value="Genomic_DNA"/>
</dbReference>
<dbReference type="EMBL" id="AF304474">
    <property type="protein sequence ID" value="AAG16262.1"/>
    <property type="molecule type" value="Genomic_DNA"/>
</dbReference>
<dbReference type="EMBL" id="AF304480">
    <property type="protein sequence ID" value="AAG16268.1"/>
    <property type="molecule type" value="Genomic_DNA"/>
</dbReference>
<dbReference type="EMBL" id="FM180569">
    <property type="protein sequence ID" value="CAS07439.1"/>
    <property type="molecule type" value="Genomic_DNA"/>
</dbReference>
<dbReference type="PIR" id="S70966">
    <property type="entry name" value="S70966"/>
</dbReference>
<dbReference type="RefSeq" id="WP_000253757.1">
    <property type="nucleotide sequence ID" value="NC_011603.1"/>
</dbReference>
<dbReference type="RefSeq" id="YP_001965379.1">
    <property type="nucleotide sequence ID" value="NC_010862.1"/>
</dbReference>
<dbReference type="PDB" id="1ZWT">
    <property type="method" value="NMR"/>
    <property type="chains" value="A=38-193"/>
</dbReference>
<dbReference type="PDBsum" id="1ZWT"/>
<dbReference type="BMRB" id="P33553"/>
<dbReference type="SMR" id="P33553"/>
<dbReference type="iPTMnet" id="P33553"/>
<dbReference type="KEGG" id="ecg:E2348_P1_003"/>
<dbReference type="HOGENOM" id="CLU_1376315_0_0_6"/>
<dbReference type="EvolutionaryTrace" id="P33553"/>
<dbReference type="Proteomes" id="UP000008205">
    <property type="component" value="Plasmid pMAR2"/>
</dbReference>
<dbReference type="GO" id="GO:0016020">
    <property type="term" value="C:membrane"/>
    <property type="evidence" value="ECO:0007669"/>
    <property type="project" value="UniProtKB-SubCell"/>
</dbReference>
<dbReference type="GO" id="GO:0009289">
    <property type="term" value="C:pilus"/>
    <property type="evidence" value="ECO:0007669"/>
    <property type="project" value="UniProtKB-SubCell"/>
</dbReference>
<dbReference type="Gene3D" id="3.30.1690.10">
    <property type="entry name" value="TcpA-like pilin"/>
    <property type="match status" value="1"/>
</dbReference>
<dbReference type="InterPro" id="IPR007971">
    <property type="entry name" value="Bundlin"/>
</dbReference>
<dbReference type="InterPro" id="IPR012902">
    <property type="entry name" value="N_methyl_site"/>
</dbReference>
<dbReference type="InterPro" id="IPR045584">
    <property type="entry name" value="Pilin-like"/>
</dbReference>
<dbReference type="Pfam" id="PF05307">
    <property type="entry name" value="Bundlin"/>
    <property type="match status" value="1"/>
</dbReference>
<dbReference type="SUPFAM" id="SSF54523">
    <property type="entry name" value="Pili subunits"/>
    <property type="match status" value="1"/>
</dbReference>
<dbReference type="PROSITE" id="PS00409">
    <property type="entry name" value="PROKAR_NTER_METHYL"/>
    <property type="match status" value="1"/>
</dbReference>